<organism>
    <name type="scientific">Paramecium tetraurelia</name>
    <dbReference type="NCBI Taxonomy" id="5888"/>
    <lineage>
        <taxon>Eukaryota</taxon>
        <taxon>Sar</taxon>
        <taxon>Alveolata</taxon>
        <taxon>Ciliophora</taxon>
        <taxon>Intramacronucleata</taxon>
        <taxon>Oligohymenophorea</taxon>
        <taxon>Peniculida</taxon>
        <taxon>Parameciidae</taxon>
        <taxon>Paramecium</taxon>
    </lineage>
</organism>
<evidence type="ECO:0000305" key="1"/>
<proteinExistence type="predicted"/>
<dbReference type="EMBL" id="X15917">
    <property type="protein sequence ID" value="CAA34059.1"/>
    <property type="molecule type" value="Genomic_DNA"/>
</dbReference>
<dbReference type="EMBL" id="M15275">
    <property type="protein sequence ID" value="AAA79261.1"/>
    <property type="molecule type" value="Genomic_DNA"/>
</dbReference>
<dbReference type="PIR" id="S07726">
    <property type="entry name" value="S07726"/>
</dbReference>
<dbReference type="SMR" id="P15603"/>
<dbReference type="GO" id="GO:0005739">
    <property type="term" value="C:mitochondrion"/>
    <property type="evidence" value="ECO:0007669"/>
    <property type="project" value="UniProtKB-SubCell"/>
</dbReference>
<reference key="1">
    <citation type="journal article" date="1990" name="Nucleic Acids Res.">
        <title>Nucleotide sequence of the mitochondrial genome of Paramecium.</title>
        <authorList>
            <person name="Pritchard A.E."/>
            <person name="Seilhamer J.J."/>
            <person name="Mahalingam R."/>
            <person name="Sable C.L."/>
            <person name="Venuti S.E."/>
            <person name="Cummings D.J."/>
        </authorList>
    </citation>
    <scope>NUCLEOTIDE SEQUENCE [GENOMIC DNA]</scope>
    <source>
        <strain>Stock 51</strain>
    </source>
</reference>
<reference key="2">
    <citation type="journal article" date="1986" name="Gene">
        <title>Paramecium mitochondrial DNA sequences and RNA transcripts for cytochrome oxidase subunit I, URF1, and three ORFs adjacent to the replication origin.</title>
        <authorList>
            <person name="Pritchard A.E."/>
            <person name="Seilhamer J.J."/>
            <person name="Cummings D.J."/>
        </authorList>
    </citation>
    <scope>NUCLEOTIDE SEQUENCE [GENOMIC DNA]</scope>
    <source>
        <strain>Stock 51</strain>
    </source>
</reference>
<geneLocation type="mitochondrion"/>
<sequence>MFNWLNFFNFFFFFLFFVFLTTSFNFFCLVLTSELMWALLLLISAVLGSILDDFFLASFAFLLLGFASVELSIGLILMVYLKTTNLSLNLAAHKGSSYATLFLLKKGASKKKI</sequence>
<name>YM01_PARTE</name>
<keyword id="KW-0496">Mitochondrion</keyword>
<feature type="chain" id="PRO_0000196864" description="Uncharacterized mitochondrial protein ORF1">
    <location>
        <begin position="1"/>
        <end position="113"/>
    </location>
</feature>
<comment type="subcellular location">
    <subcellularLocation>
        <location evidence="1">Mitochondrion</location>
    </subcellularLocation>
</comment>
<protein>
    <recommendedName>
        <fullName>Uncharacterized mitochondrial protein ORF1</fullName>
    </recommendedName>
</protein>
<accession>P15603</accession>